<keyword id="KW-0378">Hydrolase</keyword>
<feature type="chain" id="PRO_1000197802" description="UPF0173 metal-dependent hydrolase A2cp1_1196">
    <location>
        <begin position="1"/>
        <end position="274"/>
    </location>
</feature>
<reference key="1">
    <citation type="submission" date="2009-01" db="EMBL/GenBank/DDBJ databases">
        <title>Complete sequence of Anaeromyxobacter dehalogenans 2CP-1.</title>
        <authorList>
            <person name="Lucas S."/>
            <person name="Copeland A."/>
            <person name="Lapidus A."/>
            <person name="Glavina del Rio T."/>
            <person name="Dalin E."/>
            <person name="Tice H."/>
            <person name="Bruce D."/>
            <person name="Goodwin L."/>
            <person name="Pitluck S."/>
            <person name="Saunders E."/>
            <person name="Brettin T."/>
            <person name="Detter J.C."/>
            <person name="Han C."/>
            <person name="Larimer F."/>
            <person name="Land M."/>
            <person name="Hauser L."/>
            <person name="Kyrpides N."/>
            <person name="Ovchinnikova G."/>
            <person name="Beliaev A.S."/>
            <person name="Richardson P."/>
        </authorList>
    </citation>
    <scope>NUCLEOTIDE SEQUENCE [LARGE SCALE GENOMIC DNA]</scope>
    <source>
        <strain>2CP-1 / ATCC BAA-258</strain>
    </source>
</reference>
<proteinExistence type="inferred from homology"/>
<accession>B8JFV3</accession>
<dbReference type="EMBL" id="CP001359">
    <property type="protein sequence ID" value="ACL64541.1"/>
    <property type="molecule type" value="Genomic_DNA"/>
</dbReference>
<dbReference type="RefSeq" id="WP_012632531.1">
    <property type="nucleotide sequence ID" value="NC_011891.1"/>
</dbReference>
<dbReference type="SMR" id="B8JFV3"/>
<dbReference type="KEGG" id="acp:A2cp1_1196"/>
<dbReference type="HOGENOM" id="CLU_070010_4_0_7"/>
<dbReference type="Proteomes" id="UP000007089">
    <property type="component" value="Chromosome"/>
</dbReference>
<dbReference type="GO" id="GO:0016787">
    <property type="term" value="F:hydrolase activity"/>
    <property type="evidence" value="ECO:0007669"/>
    <property type="project" value="UniProtKB-UniRule"/>
</dbReference>
<dbReference type="Gene3D" id="3.60.15.10">
    <property type="entry name" value="Ribonuclease Z/Hydroxyacylglutathione hydrolase-like"/>
    <property type="match status" value="1"/>
</dbReference>
<dbReference type="HAMAP" id="MF_00457">
    <property type="entry name" value="UPF0173"/>
    <property type="match status" value="1"/>
</dbReference>
<dbReference type="InterPro" id="IPR001279">
    <property type="entry name" value="Metallo-B-lactamas"/>
</dbReference>
<dbReference type="InterPro" id="IPR036866">
    <property type="entry name" value="RibonucZ/Hydroxyglut_hydro"/>
</dbReference>
<dbReference type="InterPro" id="IPR022877">
    <property type="entry name" value="UPF0173"/>
</dbReference>
<dbReference type="InterPro" id="IPR050114">
    <property type="entry name" value="UPF0173_UPF0282_UlaG_hydrolase"/>
</dbReference>
<dbReference type="NCBIfam" id="NF001911">
    <property type="entry name" value="PRK00685.1"/>
    <property type="match status" value="1"/>
</dbReference>
<dbReference type="PANTHER" id="PTHR43546:SF3">
    <property type="entry name" value="UPF0173 METAL-DEPENDENT HYDROLASE MJ1163"/>
    <property type="match status" value="1"/>
</dbReference>
<dbReference type="PANTHER" id="PTHR43546">
    <property type="entry name" value="UPF0173 METAL-DEPENDENT HYDROLASE MJ1163-RELATED"/>
    <property type="match status" value="1"/>
</dbReference>
<dbReference type="Pfam" id="PF13483">
    <property type="entry name" value="Lactamase_B_3"/>
    <property type="match status" value="1"/>
</dbReference>
<dbReference type="SMART" id="SM00849">
    <property type="entry name" value="Lactamase_B"/>
    <property type="match status" value="1"/>
</dbReference>
<dbReference type="SUPFAM" id="SSF56281">
    <property type="entry name" value="Metallo-hydrolase/oxidoreductase"/>
    <property type="match status" value="1"/>
</dbReference>
<protein>
    <recommendedName>
        <fullName evidence="1">UPF0173 metal-dependent hydrolase A2cp1_1196</fullName>
    </recommendedName>
</protein>
<evidence type="ECO:0000255" key="1">
    <source>
        <dbReference type="HAMAP-Rule" id="MF_00457"/>
    </source>
</evidence>
<sequence>MPSASSPRARLAALAVAALAAAPLAASAQPKAARGRTEVTWYGHAAFVVTTPGGTVLAIDPWLSNPKAPEPGLAGKLPKVDYILVSHGHFDHVGDAVALAKRTGAKLITNFDLGSSLVAAGYPKDQAGMDTLGNIGGTIQAGDAAVTMVTAVHSSGYADDKGTAHPGGNPMGFVIQVKGGPTLYHTGDTDLTQDMKQLPERFGRVDVMLTCIGGHFTMDPKAAAIAVGYVRPRTVVPMHFGTFPAIAGTPEELRAALKGKAEVRVLEPGKPVGF</sequence>
<organism>
    <name type="scientific">Anaeromyxobacter dehalogenans (strain 2CP-1 / ATCC BAA-258)</name>
    <dbReference type="NCBI Taxonomy" id="455488"/>
    <lineage>
        <taxon>Bacteria</taxon>
        <taxon>Pseudomonadati</taxon>
        <taxon>Myxococcota</taxon>
        <taxon>Myxococcia</taxon>
        <taxon>Myxococcales</taxon>
        <taxon>Cystobacterineae</taxon>
        <taxon>Anaeromyxobacteraceae</taxon>
        <taxon>Anaeromyxobacter</taxon>
    </lineage>
</organism>
<name>Y1196_ANAD2</name>
<comment type="similarity">
    <text evidence="1">Belongs to the UPF0173 family.</text>
</comment>
<gene>
    <name type="ordered locus">A2cp1_1196</name>
</gene>